<protein>
    <recommendedName>
        <fullName>Agouti-signaling protein</fullName>
        <shortName>ASP</shortName>
    </recommendedName>
    <alternativeName>
        <fullName>Agouti switch protein</fullName>
    </alternativeName>
</protein>
<gene>
    <name type="primary">ASIP</name>
</gene>
<feature type="signal peptide" evidence="4">
    <location>
        <begin position="1"/>
        <end position="22"/>
    </location>
</feature>
<feature type="chain" id="PRO_0000235197" description="Agouti-signaling protein">
    <location>
        <begin position="23"/>
        <end position="132"/>
    </location>
</feature>
<feature type="domain" description="Agouti" evidence="5">
    <location>
        <begin position="93"/>
        <end position="132"/>
    </location>
</feature>
<feature type="region of interest" description="Disordered" evidence="6">
    <location>
        <begin position="61"/>
        <end position="87"/>
    </location>
</feature>
<feature type="compositionally biased region" description="Basic and acidic residues" evidence="6">
    <location>
        <begin position="64"/>
        <end position="79"/>
    </location>
</feature>
<feature type="glycosylation site" description="N-linked (GlcNAc...) asparagine" evidence="4">
    <location>
        <position position="39"/>
    </location>
</feature>
<feature type="disulfide bond" evidence="5">
    <location>
        <begin position="93"/>
        <end position="108"/>
    </location>
</feature>
<feature type="disulfide bond" evidence="5">
    <location>
        <begin position="100"/>
        <end position="114"/>
    </location>
</feature>
<feature type="disulfide bond" evidence="5">
    <location>
        <begin position="107"/>
        <end position="125"/>
    </location>
</feature>
<feature type="disulfide bond" evidence="5">
    <location>
        <begin position="111"/>
        <end position="132"/>
    </location>
</feature>
<feature type="disulfide bond" evidence="5">
    <location>
        <begin position="116"/>
        <end position="123"/>
    </location>
</feature>
<organism>
    <name type="scientific">Colobus polykomos</name>
    <name type="common">Western black-and-white colobus monkey</name>
    <dbReference type="NCBI Taxonomy" id="9572"/>
    <lineage>
        <taxon>Eukaryota</taxon>
        <taxon>Metazoa</taxon>
        <taxon>Chordata</taxon>
        <taxon>Craniata</taxon>
        <taxon>Vertebrata</taxon>
        <taxon>Euteleostomi</taxon>
        <taxon>Mammalia</taxon>
        <taxon>Eutheria</taxon>
        <taxon>Euarchontoglires</taxon>
        <taxon>Primates</taxon>
        <taxon>Haplorrhini</taxon>
        <taxon>Catarrhini</taxon>
        <taxon>Cercopithecidae</taxon>
        <taxon>Colobinae</taxon>
        <taxon>Colobus</taxon>
    </lineage>
</organism>
<accession>Q1XGU5</accession>
<proteinExistence type="inferred from homology"/>
<reference key="1">
    <citation type="journal article" date="2006" name="Genome Res.">
        <title>Alu-mediated 100-kb deletion in the primate genome: the loss of the agouti signaling protein gene in the lesser apes.</title>
        <authorList>
            <person name="Nakayama K."/>
            <person name="Ishida T."/>
        </authorList>
    </citation>
    <scope>NUCLEOTIDE SEQUENCE [GENOMIC DNA]</scope>
</reference>
<keyword id="KW-1015">Disulfide bond</keyword>
<keyword id="KW-0325">Glycoprotein</keyword>
<keyword id="KW-0960">Knottin</keyword>
<keyword id="KW-0964">Secreted</keyword>
<keyword id="KW-0732">Signal</keyword>
<evidence type="ECO:0000250" key="1"/>
<evidence type="ECO:0000250" key="2">
    <source>
        <dbReference type="UniProtKB" id="P42127"/>
    </source>
</evidence>
<evidence type="ECO:0000250" key="3">
    <source>
        <dbReference type="UniProtKB" id="Q03288"/>
    </source>
</evidence>
<evidence type="ECO:0000255" key="4"/>
<evidence type="ECO:0000255" key="5">
    <source>
        <dbReference type="PROSITE-ProRule" id="PRU00494"/>
    </source>
</evidence>
<evidence type="ECO:0000256" key="6">
    <source>
        <dbReference type="SAM" id="MobiDB-lite"/>
    </source>
</evidence>
<name>ASIP_COLPO</name>
<sequence length="132" mass="14710">MDVTRLLLATLLVFLCFFTVYSHLPPEEKLRDDRSLRSNSSVNLLDFPSVSIVALNKKSKHISRKEAEKKRSSKKEASMKKVARPRTPLSAPCVATRDSCKPPAPACCDPCASCQCRFFRSACSCRVLSLNC</sequence>
<dbReference type="EMBL" id="AB236881">
    <property type="protein sequence ID" value="BAE93029.1"/>
    <property type="molecule type" value="Genomic_DNA"/>
</dbReference>
<dbReference type="GlyCosmos" id="Q1XGU5">
    <property type="glycosylation" value="1 site, No reported glycans"/>
</dbReference>
<dbReference type="GO" id="GO:0005615">
    <property type="term" value="C:extracellular space"/>
    <property type="evidence" value="ECO:0000250"/>
    <property type="project" value="UniProtKB"/>
</dbReference>
<dbReference type="GO" id="GO:0031779">
    <property type="term" value="F:melanocortin receptor binding"/>
    <property type="evidence" value="ECO:0007669"/>
    <property type="project" value="TreeGrafter"/>
</dbReference>
<dbReference type="GO" id="GO:0005184">
    <property type="term" value="F:neuropeptide hormone activity"/>
    <property type="evidence" value="ECO:0007669"/>
    <property type="project" value="TreeGrafter"/>
</dbReference>
<dbReference type="GO" id="GO:0009755">
    <property type="term" value="P:hormone-mediated signaling pathway"/>
    <property type="evidence" value="ECO:0007669"/>
    <property type="project" value="InterPro"/>
</dbReference>
<dbReference type="GO" id="GO:0042438">
    <property type="term" value="P:melanin biosynthetic process"/>
    <property type="evidence" value="ECO:0000250"/>
    <property type="project" value="UniProtKB"/>
</dbReference>
<dbReference type="GO" id="GO:0032438">
    <property type="term" value="P:melanosome organization"/>
    <property type="evidence" value="ECO:0007669"/>
    <property type="project" value="TreeGrafter"/>
</dbReference>
<dbReference type="FunFam" id="4.10.760.10:FF:000002">
    <property type="entry name" value="Agouti-signaling protein"/>
    <property type="match status" value="1"/>
</dbReference>
<dbReference type="Gene3D" id="4.10.760.10">
    <property type="entry name" value="Agouti domain"/>
    <property type="match status" value="1"/>
</dbReference>
<dbReference type="InterPro" id="IPR007733">
    <property type="entry name" value="Agouti"/>
</dbReference>
<dbReference type="InterPro" id="IPR027300">
    <property type="entry name" value="Agouti_dom"/>
</dbReference>
<dbReference type="InterPro" id="IPR036836">
    <property type="entry name" value="Agouti_dom_sf"/>
</dbReference>
<dbReference type="PANTHER" id="PTHR16551">
    <property type="entry name" value="AGOUTI RELATED"/>
    <property type="match status" value="1"/>
</dbReference>
<dbReference type="PANTHER" id="PTHR16551:SF1">
    <property type="entry name" value="AGOUTI-SIGNALING PROTEIN"/>
    <property type="match status" value="1"/>
</dbReference>
<dbReference type="Pfam" id="PF05039">
    <property type="entry name" value="Agouti"/>
    <property type="match status" value="1"/>
</dbReference>
<dbReference type="SMART" id="SM00792">
    <property type="entry name" value="Agouti"/>
    <property type="match status" value="1"/>
</dbReference>
<dbReference type="SUPFAM" id="SSF57055">
    <property type="entry name" value="Agouti-related protein"/>
    <property type="match status" value="1"/>
</dbReference>
<dbReference type="PROSITE" id="PS60024">
    <property type="entry name" value="AGOUTI_1"/>
    <property type="match status" value="1"/>
</dbReference>
<dbReference type="PROSITE" id="PS51150">
    <property type="entry name" value="AGOUTI_2"/>
    <property type="match status" value="1"/>
</dbReference>
<comment type="function">
    <text evidence="3">Involved in the regulation of melanogenesis. The binding of ASP to MC1R precludes alpha-MSH initiated signaling and thus blocks production of cAMP, leading to a down-regulation of eumelanogenesis (brown/black pigment) and thus increasing synthesis of pheomelanin (yellow/red pigment) (By similarity).</text>
</comment>
<comment type="subcellular location">
    <subcellularLocation>
        <location evidence="2">Secreted</location>
    </subcellularLocation>
</comment>
<comment type="domain">
    <text evidence="1">The presence of a 'disulfide through disulfide knot' structurally defines this protein as a knottin.</text>
</comment>